<reference key="1">
    <citation type="journal article" date="2008" name="J. Bacteriol.">
        <title>Complete genome sequence of Neisseria gonorrhoeae NCCP11945.</title>
        <authorList>
            <person name="Chung G.T."/>
            <person name="Yoo J.S."/>
            <person name="Oh H.B."/>
            <person name="Lee Y.S."/>
            <person name="Cha S.H."/>
            <person name="Kim S.J."/>
            <person name="Yoo C.K."/>
        </authorList>
    </citation>
    <scope>NUCLEOTIDE SEQUENCE [LARGE SCALE GENOMIC DNA]</scope>
    <source>
        <strain>NCCP11945</strain>
    </source>
</reference>
<proteinExistence type="inferred from homology"/>
<comment type="function">
    <text evidence="1">Involved in unsaturated fatty acids biosynthesis. Catalyzes the dehydration of short chain beta-hydroxyacyl-ACPs and long chain saturated and unsaturated beta-hydroxyacyl-ACPs.</text>
</comment>
<comment type="catalytic activity">
    <reaction evidence="1">
        <text>a (3R)-hydroxyacyl-[ACP] = a (2E)-enoyl-[ACP] + H2O</text>
        <dbReference type="Rhea" id="RHEA:13097"/>
        <dbReference type="Rhea" id="RHEA-COMP:9925"/>
        <dbReference type="Rhea" id="RHEA-COMP:9945"/>
        <dbReference type="ChEBI" id="CHEBI:15377"/>
        <dbReference type="ChEBI" id="CHEBI:78784"/>
        <dbReference type="ChEBI" id="CHEBI:78827"/>
        <dbReference type="EC" id="4.2.1.59"/>
    </reaction>
</comment>
<comment type="subcellular location">
    <subcellularLocation>
        <location evidence="1">Cytoplasm</location>
    </subcellularLocation>
</comment>
<comment type="similarity">
    <text evidence="1">Belongs to the thioester dehydratase family. FabZ subfamily.</text>
</comment>
<protein>
    <recommendedName>
        <fullName evidence="1">3-hydroxyacyl-[acyl-carrier-protein] dehydratase FabZ</fullName>
        <ecNumber evidence="1">4.2.1.59</ecNumber>
    </recommendedName>
    <alternativeName>
        <fullName evidence="1">(3R)-hydroxymyristoyl-[acyl-carrier-protein] dehydratase</fullName>
        <shortName evidence="1">(3R)-hydroxymyristoyl-ACP dehydrase</shortName>
    </alternativeName>
    <alternativeName>
        <fullName evidence="1">Beta-hydroxyacyl-ACP dehydratase</fullName>
    </alternativeName>
</protein>
<dbReference type="EC" id="4.2.1.59" evidence="1"/>
<dbReference type="EMBL" id="CP001050">
    <property type="protein sequence ID" value="ACF31070.1"/>
    <property type="molecule type" value="Genomic_DNA"/>
</dbReference>
<dbReference type="RefSeq" id="WP_002231544.1">
    <property type="nucleotide sequence ID" value="NC_011035.1"/>
</dbReference>
<dbReference type="SMR" id="B4RR12"/>
<dbReference type="GeneID" id="93387257"/>
<dbReference type="KEGG" id="ngk:NGK_2470"/>
<dbReference type="HOGENOM" id="CLU_078912_1_0_4"/>
<dbReference type="Proteomes" id="UP000002564">
    <property type="component" value="Chromosome"/>
</dbReference>
<dbReference type="GO" id="GO:0005737">
    <property type="term" value="C:cytoplasm"/>
    <property type="evidence" value="ECO:0007669"/>
    <property type="project" value="UniProtKB-SubCell"/>
</dbReference>
<dbReference type="GO" id="GO:0016020">
    <property type="term" value="C:membrane"/>
    <property type="evidence" value="ECO:0007669"/>
    <property type="project" value="GOC"/>
</dbReference>
<dbReference type="GO" id="GO:0019171">
    <property type="term" value="F:(3R)-hydroxyacyl-[acyl-carrier-protein] dehydratase activity"/>
    <property type="evidence" value="ECO:0007669"/>
    <property type="project" value="UniProtKB-EC"/>
</dbReference>
<dbReference type="GO" id="GO:0006633">
    <property type="term" value="P:fatty acid biosynthetic process"/>
    <property type="evidence" value="ECO:0007669"/>
    <property type="project" value="UniProtKB-UniRule"/>
</dbReference>
<dbReference type="GO" id="GO:0009245">
    <property type="term" value="P:lipid A biosynthetic process"/>
    <property type="evidence" value="ECO:0007669"/>
    <property type="project" value="UniProtKB-UniRule"/>
</dbReference>
<dbReference type="CDD" id="cd01288">
    <property type="entry name" value="FabZ"/>
    <property type="match status" value="1"/>
</dbReference>
<dbReference type="FunFam" id="3.10.129.10:FF:000001">
    <property type="entry name" value="3-hydroxyacyl-[acyl-carrier-protein] dehydratase FabZ"/>
    <property type="match status" value="1"/>
</dbReference>
<dbReference type="Gene3D" id="3.10.129.10">
    <property type="entry name" value="Hotdog Thioesterase"/>
    <property type="match status" value="1"/>
</dbReference>
<dbReference type="HAMAP" id="MF_00406">
    <property type="entry name" value="FabZ"/>
    <property type="match status" value="1"/>
</dbReference>
<dbReference type="InterPro" id="IPR013114">
    <property type="entry name" value="FabA_FabZ"/>
</dbReference>
<dbReference type="InterPro" id="IPR010084">
    <property type="entry name" value="FabZ"/>
</dbReference>
<dbReference type="InterPro" id="IPR029069">
    <property type="entry name" value="HotDog_dom_sf"/>
</dbReference>
<dbReference type="NCBIfam" id="TIGR01750">
    <property type="entry name" value="fabZ"/>
    <property type="match status" value="1"/>
</dbReference>
<dbReference type="NCBIfam" id="NF000582">
    <property type="entry name" value="PRK00006.1"/>
    <property type="match status" value="1"/>
</dbReference>
<dbReference type="PANTHER" id="PTHR30272">
    <property type="entry name" value="3-HYDROXYACYL-[ACYL-CARRIER-PROTEIN] DEHYDRATASE"/>
    <property type="match status" value="1"/>
</dbReference>
<dbReference type="PANTHER" id="PTHR30272:SF1">
    <property type="entry name" value="3-HYDROXYACYL-[ACYL-CARRIER-PROTEIN] DEHYDRATASE"/>
    <property type="match status" value="1"/>
</dbReference>
<dbReference type="Pfam" id="PF07977">
    <property type="entry name" value="FabA"/>
    <property type="match status" value="1"/>
</dbReference>
<dbReference type="SUPFAM" id="SSF54637">
    <property type="entry name" value="Thioesterase/thiol ester dehydrase-isomerase"/>
    <property type="match status" value="1"/>
</dbReference>
<accession>B4RR12</accession>
<evidence type="ECO:0000255" key="1">
    <source>
        <dbReference type="HAMAP-Rule" id="MF_00406"/>
    </source>
</evidence>
<name>FABZ_NEIG2</name>
<organism>
    <name type="scientific">Neisseria gonorrhoeae (strain NCCP11945)</name>
    <dbReference type="NCBI Taxonomy" id="521006"/>
    <lineage>
        <taxon>Bacteria</taxon>
        <taxon>Pseudomonadati</taxon>
        <taxon>Pseudomonadota</taxon>
        <taxon>Betaproteobacteria</taxon>
        <taxon>Neisseriales</taxon>
        <taxon>Neisseriaceae</taxon>
        <taxon>Neisseria</taxon>
    </lineage>
</organism>
<feature type="chain" id="PRO_1000123650" description="3-hydroxyacyl-[acyl-carrier-protein] dehydratase FabZ">
    <location>
        <begin position="1"/>
        <end position="149"/>
    </location>
</feature>
<feature type="active site" evidence="1">
    <location>
        <position position="53"/>
    </location>
</feature>
<keyword id="KW-0963">Cytoplasm</keyword>
<keyword id="KW-0441">Lipid A biosynthesis</keyword>
<keyword id="KW-0444">Lipid biosynthesis</keyword>
<keyword id="KW-0443">Lipid metabolism</keyword>
<keyword id="KW-0456">Lyase</keyword>
<sequence>MDVQLPIEAKDIQKLIPHRYPFLQLDRITAFEPMKTLTAIKNVTINEPQFQGHFPDLPVMPGVLIIEAMAQACGTLAILSEGGRKENEFFFFAGIDEARFKRQVIPGDQLVFEVELLTSRRGIGKFNAVAKVDGQVAVEAVIMCAKRVV</sequence>
<gene>
    <name evidence="1" type="primary">fabZ</name>
    <name type="ordered locus">NGK_2470</name>
</gene>